<proteinExistence type="inferred from homology"/>
<reference key="1">
    <citation type="journal article" date="2005" name="Proc. Natl. Acad. Sci. U.S.A.">
        <title>Complete genome sequence of Vibrio fischeri: a symbiotic bacterium with pathogenic congeners.</title>
        <authorList>
            <person name="Ruby E.G."/>
            <person name="Urbanowski M."/>
            <person name="Campbell J."/>
            <person name="Dunn A."/>
            <person name="Faini M."/>
            <person name="Gunsalus R."/>
            <person name="Lostroh P."/>
            <person name="Lupp C."/>
            <person name="McCann J."/>
            <person name="Millikan D."/>
            <person name="Schaefer A."/>
            <person name="Stabb E."/>
            <person name="Stevens A."/>
            <person name="Visick K."/>
            <person name="Whistler C."/>
            <person name="Greenberg E.P."/>
        </authorList>
    </citation>
    <scope>NUCLEOTIDE SEQUENCE [LARGE SCALE GENOMIC DNA]</scope>
    <source>
        <strain>ATCC 700601 / ES114</strain>
    </source>
</reference>
<protein>
    <recommendedName>
        <fullName evidence="1">Dephospho-CoA kinase</fullName>
        <ecNumber evidence="1">2.7.1.24</ecNumber>
    </recommendedName>
    <alternativeName>
        <fullName evidence="1">Dephosphocoenzyme A kinase</fullName>
    </alternativeName>
</protein>
<accession>Q5E2R2</accession>
<comment type="function">
    <text evidence="1">Catalyzes the phosphorylation of the 3'-hydroxyl group of dephosphocoenzyme A to form coenzyme A.</text>
</comment>
<comment type="catalytic activity">
    <reaction evidence="1">
        <text>3'-dephospho-CoA + ATP = ADP + CoA + H(+)</text>
        <dbReference type="Rhea" id="RHEA:18245"/>
        <dbReference type="ChEBI" id="CHEBI:15378"/>
        <dbReference type="ChEBI" id="CHEBI:30616"/>
        <dbReference type="ChEBI" id="CHEBI:57287"/>
        <dbReference type="ChEBI" id="CHEBI:57328"/>
        <dbReference type="ChEBI" id="CHEBI:456216"/>
        <dbReference type="EC" id="2.7.1.24"/>
    </reaction>
</comment>
<comment type="pathway">
    <text evidence="1">Cofactor biosynthesis; coenzyme A biosynthesis; CoA from (R)-pantothenate: step 5/5.</text>
</comment>
<comment type="subcellular location">
    <subcellularLocation>
        <location evidence="1">Cytoplasm</location>
    </subcellularLocation>
</comment>
<comment type="similarity">
    <text evidence="1">Belongs to the CoaE family.</text>
</comment>
<dbReference type="EC" id="2.7.1.24" evidence="1"/>
<dbReference type="EMBL" id="CP000020">
    <property type="protein sequence ID" value="AAW86684.1"/>
    <property type="molecule type" value="Genomic_DNA"/>
</dbReference>
<dbReference type="RefSeq" id="YP_205572.1">
    <property type="nucleotide sequence ID" value="NC_006840.2"/>
</dbReference>
<dbReference type="SMR" id="Q5E2R2"/>
<dbReference type="STRING" id="312309.VF_2189"/>
<dbReference type="EnsemblBacteria" id="AAW86684">
    <property type="protein sequence ID" value="AAW86684"/>
    <property type="gene ID" value="VF_2189"/>
</dbReference>
<dbReference type="KEGG" id="vfi:VF_2189"/>
<dbReference type="PATRIC" id="fig|312309.11.peg.2229"/>
<dbReference type="eggNOG" id="COG0237">
    <property type="taxonomic scope" value="Bacteria"/>
</dbReference>
<dbReference type="HOGENOM" id="CLU_057180_1_2_6"/>
<dbReference type="OrthoDB" id="9812943at2"/>
<dbReference type="UniPathway" id="UPA00241">
    <property type="reaction ID" value="UER00356"/>
</dbReference>
<dbReference type="Proteomes" id="UP000000537">
    <property type="component" value="Chromosome I"/>
</dbReference>
<dbReference type="GO" id="GO:0005737">
    <property type="term" value="C:cytoplasm"/>
    <property type="evidence" value="ECO:0007669"/>
    <property type="project" value="UniProtKB-SubCell"/>
</dbReference>
<dbReference type="GO" id="GO:0005524">
    <property type="term" value="F:ATP binding"/>
    <property type="evidence" value="ECO:0007669"/>
    <property type="project" value="UniProtKB-UniRule"/>
</dbReference>
<dbReference type="GO" id="GO:0004140">
    <property type="term" value="F:dephospho-CoA kinase activity"/>
    <property type="evidence" value="ECO:0007669"/>
    <property type="project" value="UniProtKB-UniRule"/>
</dbReference>
<dbReference type="GO" id="GO:0015937">
    <property type="term" value="P:coenzyme A biosynthetic process"/>
    <property type="evidence" value="ECO:0007669"/>
    <property type="project" value="UniProtKB-UniRule"/>
</dbReference>
<dbReference type="CDD" id="cd02022">
    <property type="entry name" value="DPCK"/>
    <property type="match status" value="1"/>
</dbReference>
<dbReference type="Gene3D" id="3.40.50.300">
    <property type="entry name" value="P-loop containing nucleotide triphosphate hydrolases"/>
    <property type="match status" value="1"/>
</dbReference>
<dbReference type="HAMAP" id="MF_00376">
    <property type="entry name" value="Dephospho_CoA_kinase"/>
    <property type="match status" value="1"/>
</dbReference>
<dbReference type="InterPro" id="IPR001977">
    <property type="entry name" value="Depp_CoAkinase"/>
</dbReference>
<dbReference type="InterPro" id="IPR027417">
    <property type="entry name" value="P-loop_NTPase"/>
</dbReference>
<dbReference type="NCBIfam" id="TIGR00152">
    <property type="entry name" value="dephospho-CoA kinase"/>
    <property type="match status" value="1"/>
</dbReference>
<dbReference type="PANTHER" id="PTHR10695:SF46">
    <property type="entry name" value="BIFUNCTIONAL COENZYME A SYNTHASE-RELATED"/>
    <property type="match status" value="1"/>
</dbReference>
<dbReference type="PANTHER" id="PTHR10695">
    <property type="entry name" value="DEPHOSPHO-COA KINASE-RELATED"/>
    <property type="match status" value="1"/>
</dbReference>
<dbReference type="Pfam" id="PF01121">
    <property type="entry name" value="CoaE"/>
    <property type="match status" value="1"/>
</dbReference>
<dbReference type="SUPFAM" id="SSF52540">
    <property type="entry name" value="P-loop containing nucleoside triphosphate hydrolases"/>
    <property type="match status" value="1"/>
</dbReference>
<dbReference type="PROSITE" id="PS51219">
    <property type="entry name" value="DPCK"/>
    <property type="match status" value="1"/>
</dbReference>
<name>COAE_ALIF1</name>
<organism>
    <name type="scientific">Aliivibrio fischeri (strain ATCC 700601 / ES114)</name>
    <name type="common">Vibrio fischeri</name>
    <dbReference type="NCBI Taxonomy" id="312309"/>
    <lineage>
        <taxon>Bacteria</taxon>
        <taxon>Pseudomonadati</taxon>
        <taxon>Pseudomonadota</taxon>
        <taxon>Gammaproteobacteria</taxon>
        <taxon>Vibrionales</taxon>
        <taxon>Vibrionaceae</taxon>
        <taxon>Aliivibrio</taxon>
    </lineage>
</organism>
<evidence type="ECO:0000255" key="1">
    <source>
        <dbReference type="HAMAP-Rule" id="MF_00376"/>
    </source>
</evidence>
<feature type="chain" id="PRO_0000243362" description="Dephospho-CoA kinase">
    <location>
        <begin position="1"/>
        <end position="182"/>
    </location>
</feature>
<feature type="domain" description="DPCK" evidence="1">
    <location>
        <begin position="4"/>
        <end position="182"/>
    </location>
</feature>
<feature type="binding site" evidence="1">
    <location>
        <begin position="12"/>
        <end position="17"/>
    </location>
    <ligand>
        <name>ATP</name>
        <dbReference type="ChEBI" id="CHEBI:30616"/>
    </ligand>
</feature>
<gene>
    <name evidence="1" type="primary">coaE</name>
    <name type="ordered locus">VF_2189</name>
</gene>
<keyword id="KW-0067">ATP-binding</keyword>
<keyword id="KW-0173">Coenzyme A biosynthesis</keyword>
<keyword id="KW-0963">Cytoplasm</keyword>
<keyword id="KW-0418">Kinase</keyword>
<keyword id="KW-0547">Nucleotide-binding</keyword>
<keyword id="KW-1185">Reference proteome</keyword>
<keyword id="KW-0808">Transferase</keyword>
<sequence length="182" mass="20463">MSYVVAITGGIGSGKTTVADRFQALYNINIVDADIIAREVVNPGTEGLIQIEQHFGPQILLDDGHLNRAKLRECIFSEPSEKQWLNDLLHPLIRSEMQRQIALSTSEYTLLVVPLLVENKLQYLANRVLVVDVLEQTQINRTVNRDKVNHQQVKAILASQASREERLAAADDIINNDHKIMT</sequence>